<protein>
    <recommendedName>
        <fullName>Alpha-2,8-sialyltransferase 8E</fullName>
        <ecNumber>2.4.99.-</ecNumber>
    </recommendedName>
    <alternativeName>
        <fullName>Sialyltransferase 8E</fullName>
        <shortName>SIAT8-E</shortName>
    </alternativeName>
    <alternativeName>
        <fullName>Sialyltransferase St8Sia V</fullName>
        <shortName>ST8SiaV</shortName>
    </alternativeName>
</protein>
<feature type="chain" id="PRO_0000149298" description="Alpha-2,8-sialyltransferase 8E">
    <location>
        <begin position="1"/>
        <end position="376"/>
    </location>
</feature>
<feature type="topological domain" description="Cytoplasmic" evidence="4">
    <location>
        <begin position="1"/>
        <end position="17"/>
    </location>
</feature>
<feature type="transmembrane region" description="Helical; Signal-anchor for type II membrane protein" evidence="4">
    <location>
        <begin position="18"/>
        <end position="38"/>
    </location>
</feature>
<feature type="topological domain" description="Lumenal" evidence="4">
    <location>
        <begin position="39"/>
        <end position="376"/>
    </location>
</feature>
<feature type="active site" description="Proton donor/acceptor" evidence="2">
    <location>
        <position position="348"/>
    </location>
</feature>
<feature type="binding site" evidence="2">
    <location>
        <position position="192"/>
    </location>
    <ligand>
        <name>substrate</name>
    </ligand>
</feature>
<feature type="binding site" evidence="2">
    <location>
        <begin position="214"/>
        <end position="216"/>
    </location>
    <ligand>
        <name>substrate</name>
    </ligand>
</feature>
<feature type="binding site" evidence="2">
    <location>
        <begin position="300"/>
        <end position="302"/>
    </location>
    <ligand>
        <name>substrate</name>
    </ligand>
</feature>
<feature type="glycosylation site" description="N-linked (GlcNAc...) asparagine" evidence="4">
    <location>
        <position position="56"/>
    </location>
</feature>
<feature type="glycosylation site" description="N-linked (GlcNAc...) asparagine" evidence="4">
    <location>
        <position position="96"/>
    </location>
</feature>
<feature type="glycosylation site" description="N-linked (GlcNAc...) asparagine" evidence="4">
    <location>
        <position position="241"/>
    </location>
</feature>
<feature type="glycosylation site" description="N-linked (GlcNAc...) asparagine" evidence="4">
    <location>
        <position position="284"/>
    </location>
</feature>
<feature type="disulfide bond" evidence="2">
    <location>
        <begin position="164"/>
        <end position="313"/>
    </location>
</feature>
<feature type="disulfide bond" evidence="2">
    <location>
        <begin position="178"/>
        <end position="373"/>
    </location>
</feature>
<gene>
    <name type="primary">ST8SIA5</name>
    <name type="synonym">SIAT8E</name>
</gene>
<sequence length="376" mass="43922">MRYADPSANRDLLGNRTLLFIFICAFALVTLLQQILYGRNYIKRYFEFYEGPFEYNSTRCLELRHEILEVKVLSMVKQSELFDRWKSLQMCKWAMNISEANQFKSTLSRCCNAPAFLFTTQKNTPLGTKLKYEVDTSGIYHINQEIFRMFPKDMPYYRSQFKKCAVVGNGGILKNSRCGREINSADFVFRCNLPPISEKYTMDVGVKTDVVTVNPSIITERFHKLEKWRRPFYRVLQVYENASVLLPAFYNTRNTDVSIRVKYVLDDFESPQAVYYFHPQYLVNVSRYWLSLGVRAKRISTGLILVTAALELCEEVHLFGFWAFPMNPSGLYITHHYYDNVKPRPGFHAMPSEIFNFLHLHSRGILRVHTGTCSCC</sequence>
<organism>
    <name type="scientific">Pan troglodytes</name>
    <name type="common">Chimpanzee</name>
    <dbReference type="NCBI Taxonomy" id="9598"/>
    <lineage>
        <taxon>Eukaryota</taxon>
        <taxon>Metazoa</taxon>
        <taxon>Chordata</taxon>
        <taxon>Craniata</taxon>
        <taxon>Vertebrata</taxon>
        <taxon>Euteleostomi</taxon>
        <taxon>Mammalia</taxon>
        <taxon>Eutheria</taxon>
        <taxon>Euarchontoglires</taxon>
        <taxon>Primates</taxon>
        <taxon>Haplorrhini</taxon>
        <taxon>Catarrhini</taxon>
        <taxon>Hominidae</taxon>
        <taxon>Pan</taxon>
    </lineage>
</organism>
<evidence type="ECO:0000250" key="1">
    <source>
        <dbReference type="UniProtKB" id="O15466"/>
    </source>
</evidence>
<evidence type="ECO:0000250" key="2">
    <source>
        <dbReference type="UniProtKB" id="O43173"/>
    </source>
</evidence>
<evidence type="ECO:0000250" key="3">
    <source>
        <dbReference type="UniProtKB" id="Q6ZXC8"/>
    </source>
</evidence>
<evidence type="ECO:0000255" key="4"/>
<evidence type="ECO:0000305" key="5"/>
<name>SIA8E_PANTR</name>
<reference key="1">
    <citation type="submission" date="2004-04" db="EMBL/GenBank/DDBJ databases">
        <title>Phylogeny of sialyltransferases.</title>
        <authorList>
            <person name="Harduin-Lepers A."/>
            <person name="Martinez-Duncker I."/>
            <person name="Mollicone R."/>
            <person name="Delannoy P."/>
            <person name="Oriol R."/>
        </authorList>
    </citation>
    <scope>NUCLEOTIDE SEQUENCE [MRNA]</scope>
</reference>
<accession>P61646</accession>
<comment type="function">
    <text evidence="1 3">Involved in the synthesis of gangliosides GD1c, GT1a, GQ1b, GP1c and GT3 from GD1a, GT1b, GM1b and GD3 respectively.</text>
</comment>
<comment type="catalytic activity">
    <reaction evidence="3">
        <text>a ganglioside GQ1c (d18:1(4E)) + CMP-N-acetyl-beta-neuraminate = a ganglioside GP1c (d18:1(4E)) + CMP + H(+)</text>
        <dbReference type="Rhea" id="RHEA:47592"/>
        <dbReference type="ChEBI" id="CHEBI:15378"/>
        <dbReference type="ChEBI" id="CHEBI:57812"/>
        <dbReference type="ChEBI" id="CHEBI:60377"/>
        <dbReference type="ChEBI" id="CHEBI:87791"/>
        <dbReference type="ChEBI" id="CHEBI:87792"/>
    </reaction>
    <physiologicalReaction direction="left-to-right" evidence="3">
        <dbReference type="Rhea" id="RHEA:47593"/>
    </physiologicalReaction>
</comment>
<comment type="pathway">
    <text evidence="1">Protein modification; protein glycosylation.</text>
</comment>
<comment type="subcellular location">
    <subcellularLocation>
        <location evidence="3">Golgi apparatus membrane</location>
        <topology evidence="4">Single-pass type II membrane protein</topology>
    </subcellularLocation>
</comment>
<comment type="similarity">
    <text evidence="5">Belongs to the glycosyltransferase 29 family.</text>
</comment>
<keyword id="KW-1015">Disulfide bond</keyword>
<keyword id="KW-0325">Glycoprotein</keyword>
<keyword id="KW-0328">Glycosyltransferase</keyword>
<keyword id="KW-0333">Golgi apparatus</keyword>
<keyword id="KW-0443">Lipid metabolism</keyword>
<keyword id="KW-0472">Membrane</keyword>
<keyword id="KW-1185">Reference proteome</keyword>
<keyword id="KW-0735">Signal-anchor</keyword>
<keyword id="KW-0808">Transferase</keyword>
<keyword id="KW-0812">Transmembrane</keyword>
<keyword id="KW-1133">Transmembrane helix</keyword>
<dbReference type="EC" id="2.4.99.-"/>
<dbReference type="EMBL" id="AJ697662">
    <property type="protein sequence ID" value="CAG26900.1"/>
    <property type="molecule type" value="mRNA"/>
</dbReference>
<dbReference type="RefSeq" id="NP_001009087.1">
    <property type="nucleotide sequence ID" value="NM_001009087.1"/>
</dbReference>
<dbReference type="SMR" id="P61646"/>
<dbReference type="FunCoup" id="P61646">
    <property type="interactions" value="166"/>
</dbReference>
<dbReference type="STRING" id="9598.ENSPTRP00000016998"/>
<dbReference type="CAZy" id="GT29">
    <property type="family name" value="Glycosyltransferase Family 29"/>
</dbReference>
<dbReference type="GlyCosmos" id="P61646">
    <property type="glycosylation" value="4 sites, No reported glycans"/>
</dbReference>
<dbReference type="PaxDb" id="9598-ENSPTRP00000016998"/>
<dbReference type="Ensembl" id="ENSPTRT00000099353.1">
    <property type="protein sequence ID" value="ENSPTRP00000062453.1"/>
    <property type="gene ID" value="ENSPTRG00000009997.5"/>
</dbReference>
<dbReference type="GeneID" id="455402"/>
<dbReference type="KEGG" id="ptr:455402"/>
<dbReference type="CTD" id="29906"/>
<dbReference type="VGNC" id="VGNC:10459">
    <property type="gene designation" value="ST8SIA5"/>
</dbReference>
<dbReference type="eggNOG" id="KOG2692">
    <property type="taxonomic scope" value="Eukaryota"/>
</dbReference>
<dbReference type="GeneTree" id="ENSGT01030000234535"/>
<dbReference type="HOGENOM" id="CLU_048583_1_1_1"/>
<dbReference type="InParanoid" id="P61646"/>
<dbReference type="TreeFam" id="TF323961"/>
<dbReference type="UniPathway" id="UPA00378"/>
<dbReference type="Proteomes" id="UP000002277">
    <property type="component" value="Chromosome 18"/>
</dbReference>
<dbReference type="Bgee" id="ENSPTRG00000009997">
    <property type="expression patterns" value="Expressed in dorsolateral prefrontal cortex and 14 other cell types or tissues"/>
</dbReference>
<dbReference type="GO" id="GO:0000139">
    <property type="term" value="C:Golgi membrane"/>
    <property type="evidence" value="ECO:0000250"/>
    <property type="project" value="UniProtKB"/>
</dbReference>
<dbReference type="GO" id="GO:0003828">
    <property type="term" value="F:alpha-N-acetylneuraminate alpha-2,8-sialyltransferase activity"/>
    <property type="evidence" value="ECO:0000318"/>
    <property type="project" value="GO_Central"/>
</dbReference>
<dbReference type="GO" id="GO:0008373">
    <property type="term" value="F:sialyltransferase activity"/>
    <property type="evidence" value="ECO:0000250"/>
    <property type="project" value="UniProtKB"/>
</dbReference>
<dbReference type="GO" id="GO:0006688">
    <property type="term" value="P:glycosphingolipid biosynthetic process"/>
    <property type="evidence" value="ECO:0000250"/>
    <property type="project" value="UniProtKB"/>
</dbReference>
<dbReference type="GO" id="GO:0006491">
    <property type="term" value="P:N-glycan processing"/>
    <property type="evidence" value="ECO:0000318"/>
    <property type="project" value="GO_Central"/>
</dbReference>
<dbReference type="GO" id="GO:0009311">
    <property type="term" value="P:oligosaccharide metabolic process"/>
    <property type="evidence" value="ECO:0000318"/>
    <property type="project" value="GO_Central"/>
</dbReference>
<dbReference type="GO" id="GO:0006486">
    <property type="term" value="P:protein glycosylation"/>
    <property type="evidence" value="ECO:0000318"/>
    <property type="project" value="GO_Central"/>
</dbReference>
<dbReference type="CDD" id="cd23990">
    <property type="entry name" value="GT29_ST8SIA5"/>
    <property type="match status" value="1"/>
</dbReference>
<dbReference type="FunFam" id="3.90.1480.20:FF:000004">
    <property type="entry name" value="alpha-2,8-sialyltransferase 8E isoform X1"/>
    <property type="match status" value="1"/>
</dbReference>
<dbReference type="Gene3D" id="3.90.1480.20">
    <property type="entry name" value="Glycosyl transferase family 29"/>
    <property type="match status" value="1"/>
</dbReference>
<dbReference type="InterPro" id="IPR001675">
    <property type="entry name" value="Glyco_trans_29"/>
</dbReference>
<dbReference type="InterPro" id="IPR050943">
    <property type="entry name" value="Glycosyltr_29_Sialyltrsf"/>
</dbReference>
<dbReference type="InterPro" id="IPR038578">
    <property type="entry name" value="GT29-like_sf"/>
</dbReference>
<dbReference type="InterPro" id="IPR012163">
    <property type="entry name" value="Sialyl_trans"/>
</dbReference>
<dbReference type="PANTHER" id="PTHR11987">
    <property type="entry name" value="ALPHA-2,8-SIALYLTRANSFERASE"/>
    <property type="match status" value="1"/>
</dbReference>
<dbReference type="PANTHER" id="PTHR11987:SF4">
    <property type="entry name" value="ALPHA-2,8-SIALYLTRANSFERASE 8E"/>
    <property type="match status" value="1"/>
</dbReference>
<dbReference type="Pfam" id="PF00777">
    <property type="entry name" value="Glyco_transf_29"/>
    <property type="match status" value="1"/>
</dbReference>
<dbReference type="PIRSF" id="PIRSF005557">
    <property type="entry name" value="Sialyl_trans"/>
    <property type="match status" value="1"/>
</dbReference>
<proteinExistence type="evidence at transcript level"/>